<protein>
    <recommendedName>
        <fullName evidence="1">Cardiolipin synthase 2</fullName>
        <shortName evidence="1">CL synthase 2</shortName>
        <ecNumber evidence="1">2.7.8.-</ecNumber>
    </recommendedName>
</protein>
<comment type="function">
    <text evidence="1">Catalyzes the reversible phosphatidyl group transfer from one phosphatidylglycerol molecule to another to form cardiolipin (CL) (diphosphatidylglycerol) and glycerol.</text>
</comment>
<comment type="catalytic activity">
    <reaction evidence="1">
        <text>2 a 1,2-diacyl-sn-glycero-3-phospho-(1'-sn-glycerol) = a cardiolipin + glycerol</text>
        <dbReference type="Rhea" id="RHEA:31451"/>
        <dbReference type="ChEBI" id="CHEBI:17754"/>
        <dbReference type="ChEBI" id="CHEBI:62237"/>
        <dbReference type="ChEBI" id="CHEBI:64716"/>
    </reaction>
</comment>
<comment type="subcellular location">
    <subcellularLocation>
        <location evidence="1">Cell membrane</location>
        <topology evidence="1">Multi-pass membrane protein</topology>
    </subcellularLocation>
</comment>
<comment type="similarity">
    <text evidence="1">Belongs to the phospholipase D family. Cardiolipin synthase subfamily.</text>
</comment>
<feature type="chain" id="PRO_0000201244" description="Cardiolipin synthase 2">
    <location>
        <begin position="1"/>
        <end position="514"/>
    </location>
</feature>
<feature type="transmembrane region" description="Helical" evidence="1">
    <location>
        <begin position="7"/>
        <end position="27"/>
    </location>
</feature>
<feature type="transmembrane region" description="Helical" evidence="1">
    <location>
        <begin position="41"/>
        <end position="61"/>
    </location>
</feature>
<feature type="transmembrane region" description="Helical" evidence="1">
    <location>
        <begin position="71"/>
        <end position="91"/>
    </location>
</feature>
<feature type="domain" description="PLD phosphodiesterase 1" evidence="1">
    <location>
        <begin position="249"/>
        <end position="276"/>
    </location>
</feature>
<feature type="domain" description="PLD phosphodiesterase 2" evidence="1">
    <location>
        <begin position="427"/>
        <end position="454"/>
    </location>
</feature>
<feature type="active site" evidence="1">
    <location>
        <position position="254"/>
    </location>
</feature>
<feature type="active site" evidence="1">
    <location>
        <position position="256"/>
    </location>
</feature>
<feature type="active site" evidence="1">
    <location>
        <position position="261"/>
    </location>
</feature>
<feature type="active site" evidence="1">
    <location>
        <position position="432"/>
    </location>
</feature>
<feature type="active site" evidence="1">
    <location>
        <position position="434"/>
    </location>
</feature>
<feature type="active site" evidence="1">
    <location>
        <position position="439"/>
    </location>
</feature>
<gene>
    <name type="primary">cls2</name>
    <name type="ordered locus">BC_1191</name>
</gene>
<evidence type="ECO:0000255" key="1">
    <source>
        <dbReference type="HAMAP-Rule" id="MF_01916"/>
    </source>
</evidence>
<dbReference type="EC" id="2.7.8.-" evidence="1"/>
<dbReference type="EMBL" id="AE016877">
    <property type="protein sequence ID" value="AAP08177.1"/>
    <property type="molecule type" value="Genomic_DNA"/>
</dbReference>
<dbReference type="RefSeq" id="NP_830976.1">
    <property type="nucleotide sequence ID" value="NC_004722.1"/>
</dbReference>
<dbReference type="RefSeq" id="WP_000799194.1">
    <property type="nucleotide sequence ID" value="NZ_CP138336.1"/>
</dbReference>
<dbReference type="SMR" id="Q81GK4"/>
<dbReference type="STRING" id="226900.BC_1191"/>
<dbReference type="KEGG" id="bce:BC1191"/>
<dbReference type="PATRIC" id="fig|226900.8.peg.1158"/>
<dbReference type="HOGENOM" id="CLU_038053_1_2_9"/>
<dbReference type="OrthoDB" id="9762009at2"/>
<dbReference type="Proteomes" id="UP000001417">
    <property type="component" value="Chromosome"/>
</dbReference>
<dbReference type="GO" id="GO:0005886">
    <property type="term" value="C:plasma membrane"/>
    <property type="evidence" value="ECO:0007669"/>
    <property type="project" value="UniProtKB-SubCell"/>
</dbReference>
<dbReference type="GO" id="GO:0008808">
    <property type="term" value="F:cardiolipin synthase activity"/>
    <property type="evidence" value="ECO:0007669"/>
    <property type="project" value="InterPro"/>
</dbReference>
<dbReference type="GO" id="GO:0032049">
    <property type="term" value="P:cardiolipin biosynthetic process"/>
    <property type="evidence" value="ECO:0007669"/>
    <property type="project" value="InterPro"/>
</dbReference>
<dbReference type="CDD" id="cd09110">
    <property type="entry name" value="PLDc_CLS_1"/>
    <property type="match status" value="1"/>
</dbReference>
<dbReference type="CDD" id="cd09112">
    <property type="entry name" value="PLDc_CLS_2"/>
    <property type="match status" value="1"/>
</dbReference>
<dbReference type="FunFam" id="3.30.870.10:FF:000014">
    <property type="entry name" value="Cardiolipin synthase"/>
    <property type="match status" value="1"/>
</dbReference>
<dbReference type="FunFam" id="3.30.870.10:FF:000021">
    <property type="entry name" value="Cardiolipin synthase"/>
    <property type="match status" value="1"/>
</dbReference>
<dbReference type="Gene3D" id="3.30.870.10">
    <property type="entry name" value="Endonuclease Chain A"/>
    <property type="match status" value="2"/>
</dbReference>
<dbReference type="HAMAP" id="MF_01916">
    <property type="entry name" value="Cardiolipin_synth_Cls"/>
    <property type="match status" value="1"/>
</dbReference>
<dbReference type="InterPro" id="IPR030874">
    <property type="entry name" value="Cardiolipin_synth_Firmi"/>
</dbReference>
<dbReference type="InterPro" id="IPR022924">
    <property type="entry name" value="Cardiolipin_synthase"/>
</dbReference>
<dbReference type="InterPro" id="IPR027379">
    <property type="entry name" value="CLS_N"/>
</dbReference>
<dbReference type="InterPro" id="IPR025202">
    <property type="entry name" value="PLD-like_dom"/>
</dbReference>
<dbReference type="InterPro" id="IPR001736">
    <property type="entry name" value="PLipase_D/transphosphatidylase"/>
</dbReference>
<dbReference type="NCBIfam" id="TIGR04265">
    <property type="entry name" value="bac_cardiolipin"/>
    <property type="match status" value="1"/>
</dbReference>
<dbReference type="PANTHER" id="PTHR21248">
    <property type="entry name" value="CARDIOLIPIN SYNTHASE"/>
    <property type="match status" value="1"/>
</dbReference>
<dbReference type="PANTHER" id="PTHR21248:SF20">
    <property type="entry name" value="CARDIOLIPIN SYNTHASE YWIE-RELATED"/>
    <property type="match status" value="1"/>
</dbReference>
<dbReference type="Pfam" id="PF13091">
    <property type="entry name" value="PLDc_2"/>
    <property type="match status" value="2"/>
</dbReference>
<dbReference type="Pfam" id="PF13396">
    <property type="entry name" value="PLDc_N"/>
    <property type="match status" value="1"/>
</dbReference>
<dbReference type="SMART" id="SM00155">
    <property type="entry name" value="PLDc"/>
    <property type="match status" value="2"/>
</dbReference>
<dbReference type="SUPFAM" id="SSF56024">
    <property type="entry name" value="Phospholipase D/nuclease"/>
    <property type="match status" value="2"/>
</dbReference>
<dbReference type="PROSITE" id="PS50035">
    <property type="entry name" value="PLD"/>
    <property type="match status" value="2"/>
</dbReference>
<reference key="1">
    <citation type="journal article" date="2003" name="Nature">
        <title>Genome sequence of Bacillus cereus and comparative analysis with Bacillus anthracis.</title>
        <authorList>
            <person name="Ivanova N."/>
            <person name="Sorokin A."/>
            <person name="Anderson I."/>
            <person name="Galleron N."/>
            <person name="Candelon B."/>
            <person name="Kapatral V."/>
            <person name="Bhattacharyya A."/>
            <person name="Reznik G."/>
            <person name="Mikhailova N."/>
            <person name="Lapidus A."/>
            <person name="Chu L."/>
            <person name="Mazur M."/>
            <person name="Goltsman E."/>
            <person name="Larsen N."/>
            <person name="D'Souza M."/>
            <person name="Walunas T."/>
            <person name="Grechkin Y."/>
            <person name="Pusch G."/>
            <person name="Haselkorn R."/>
            <person name="Fonstein M."/>
            <person name="Ehrlich S.D."/>
            <person name="Overbeek R."/>
            <person name="Kyrpides N.C."/>
        </authorList>
    </citation>
    <scope>NUCLEOTIDE SEQUENCE [LARGE SCALE GENOMIC DNA]</scope>
    <source>
        <strain>ATCC 14579 / DSM 31 / CCUG 7414 / JCM 2152 / NBRC 15305 / NCIMB 9373 / NCTC 2599 / NRRL B-3711</strain>
    </source>
</reference>
<organism>
    <name type="scientific">Bacillus cereus (strain ATCC 14579 / DSM 31 / CCUG 7414 / JCM 2152 / NBRC 15305 / NCIMB 9373 / NCTC 2599 / NRRL B-3711)</name>
    <dbReference type="NCBI Taxonomy" id="226900"/>
    <lineage>
        <taxon>Bacteria</taxon>
        <taxon>Bacillati</taxon>
        <taxon>Bacillota</taxon>
        <taxon>Bacilli</taxon>
        <taxon>Bacillales</taxon>
        <taxon>Bacillaceae</taxon>
        <taxon>Bacillus</taxon>
        <taxon>Bacillus cereus group</taxon>
    </lineage>
</organism>
<accession>Q81GK4</accession>
<name>CLS2_BACCR</name>
<sequence length="514" mass="59466">MKNTLKLIFFILLLFALFVSLRMFIDVAFYSDVIGIKDVSILGIISILFTVSAFLIGCVIFLENRHPSKTLTWLIVLGIFPVFGFFAYLLFGQNFRRKRMFQKKALLDEQAFLQYKGHEDYEERILRNHKHQELLFRLADRLGALNISFQTETRTLTNGDETFRAILNGLKRAKHHIHMEYYIVRDDKLGTEIKDILIQKSKEGVVVRFLYDAVGSFKLSKSYIEELNDAGVEMIPFFPVRFPILNDKINYRNHRKIVVIDGNEGFVGGLNIGDEYLGKNKYFGFWRDTHLYLRGEAVQSLQLIFLQDWFYMTGEAVLAPEYLQAKAVEGDHWGGVQLVAGGPDNKWETIKHLYFAMIASARKSIWIATPYFIPDDDILSALKVAALAGIDVRLLMPSKPDKRTVFYASRSYFPELLDAGVKIYEYEKGFLHSKIVIVDSDLASIGTANMDMRSFHLNFEVNAFLYDTDSIRKLVQDFKDDLEESSEIHGDHFHKRRLHRRIVESTYRLLSPLL</sequence>
<proteinExistence type="inferred from homology"/>
<keyword id="KW-1003">Cell membrane</keyword>
<keyword id="KW-0444">Lipid biosynthesis</keyword>
<keyword id="KW-0443">Lipid metabolism</keyword>
<keyword id="KW-0472">Membrane</keyword>
<keyword id="KW-0594">Phospholipid biosynthesis</keyword>
<keyword id="KW-1208">Phospholipid metabolism</keyword>
<keyword id="KW-1185">Reference proteome</keyword>
<keyword id="KW-0677">Repeat</keyword>
<keyword id="KW-0808">Transferase</keyword>
<keyword id="KW-0812">Transmembrane</keyword>
<keyword id="KW-1133">Transmembrane helix</keyword>